<accession>Q5V630</accession>
<proteinExistence type="inferred from homology"/>
<reference key="1">
    <citation type="journal article" date="2004" name="Genome Res.">
        <title>Genome sequence of Haloarcula marismortui: a halophilic archaeon from the Dead Sea.</title>
        <authorList>
            <person name="Baliga N.S."/>
            <person name="Bonneau R."/>
            <person name="Facciotti M.T."/>
            <person name="Pan M."/>
            <person name="Glusman G."/>
            <person name="Deutsch E.W."/>
            <person name="Shannon P."/>
            <person name="Chiu Y."/>
            <person name="Weng R.S."/>
            <person name="Gan R.R."/>
            <person name="Hung P."/>
            <person name="Date S.V."/>
            <person name="Marcotte E."/>
            <person name="Hood L."/>
            <person name="Ng W.V."/>
        </authorList>
    </citation>
    <scope>NUCLEOTIDE SEQUENCE [LARGE SCALE GENOMIC DNA]</scope>
    <source>
        <strain>ATCC 43049 / DSM 3752 / JCM 8966 / VKM B-1809</strain>
    </source>
</reference>
<name>FOLD2_HALMA</name>
<geneLocation type="plasmid">
    <name>pNG700</name>
</geneLocation>
<organism>
    <name type="scientific">Haloarcula marismortui (strain ATCC 43049 / DSM 3752 / JCM 8966 / VKM B-1809)</name>
    <name type="common">Halobacterium marismortui</name>
    <dbReference type="NCBI Taxonomy" id="272569"/>
    <lineage>
        <taxon>Archaea</taxon>
        <taxon>Methanobacteriati</taxon>
        <taxon>Methanobacteriota</taxon>
        <taxon>Stenosarchaea group</taxon>
        <taxon>Halobacteria</taxon>
        <taxon>Halobacteriales</taxon>
        <taxon>Haloarculaceae</taxon>
        <taxon>Haloarcula</taxon>
    </lineage>
</organism>
<evidence type="ECO:0000255" key="1">
    <source>
        <dbReference type="HAMAP-Rule" id="MF_01576"/>
    </source>
</evidence>
<feature type="chain" id="PRO_0000268579" description="Bifunctional protein FolD 2">
    <location>
        <begin position="1"/>
        <end position="297"/>
    </location>
</feature>
<feature type="binding site" evidence="1">
    <location>
        <begin position="164"/>
        <end position="166"/>
    </location>
    <ligand>
        <name>NADP(+)</name>
        <dbReference type="ChEBI" id="CHEBI:58349"/>
    </ligand>
</feature>
<feature type="binding site" evidence="1">
    <location>
        <position position="193"/>
    </location>
    <ligand>
        <name>NADP(+)</name>
        <dbReference type="ChEBI" id="CHEBI:58349"/>
    </ligand>
</feature>
<feature type="binding site" evidence="1">
    <location>
        <position position="234"/>
    </location>
    <ligand>
        <name>NADP(+)</name>
        <dbReference type="ChEBI" id="CHEBI:58349"/>
    </ligand>
</feature>
<sequence length="297" mass="31161">MTTVIDGNEIGDQITEGVAACTDTLVSEGVTPGLATVLMSDDGASETYVSMKQRACNEIGIEGFHHQISADESAEALFSTIDELNADPAVHGILVQMPVPDHVPKRDVLERIDPMKDVDGFHPENVGRLVAGNARYKPCTPHGIQKMLAETGVVTEGKDVVVVGRSDIVGKPMANLLIQYGPGGNATTTVCHSRTDDLADKTRNADIVIAAAGVPEMIDGSMLSAGTTVIDVGINRVDADTEKGYELVGDVDFESAKEKADAITPVPGGVGPLTIAMLLYNTVKAASLQSGVDIRLP</sequence>
<gene>
    <name evidence="1" type="primary">folD2</name>
    <name type="ordered locus">pNG7328</name>
</gene>
<dbReference type="EC" id="1.5.1.5" evidence="1"/>
<dbReference type="EC" id="3.5.4.9" evidence="1"/>
<dbReference type="EMBL" id="AY596296">
    <property type="protein sequence ID" value="AAV45022.1"/>
    <property type="molecule type" value="Genomic_DNA"/>
</dbReference>
<dbReference type="RefSeq" id="WP_007190563.1">
    <property type="nucleotide sequence ID" value="NZ_CP039137.1"/>
</dbReference>
<dbReference type="SMR" id="Q5V630"/>
<dbReference type="EnsemblBacteria" id="AAV45022">
    <property type="protein sequence ID" value="AAV45022"/>
    <property type="gene ID" value="pNG7328"/>
</dbReference>
<dbReference type="KEGG" id="hma:pNG7328"/>
<dbReference type="PATRIC" id="fig|272569.17.peg.754"/>
<dbReference type="HOGENOM" id="CLU_034045_2_1_2"/>
<dbReference type="UniPathway" id="UPA00193"/>
<dbReference type="Proteomes" id="UP000001169">
    <property type="component" value="Plasmid pNG700"/>
</dbReference>
<dbReference type="GO" id="GO:0005829">
    <property type="term" value="C:cytosol"/>
    <property type="evidence" value="ECO:0007669"/>
    <property type="project" value="TreeGrafter"/>
</dbReference>
<dbReference type="GO" id="GO:0004477">
    <property type="term" value="F:methenyltetrahydrofolate cyclohydrolase activity"/>
    <property type="evidence" value="ECO:0007669"/>
    <property type="project" value="UniProtKB-UniRule"/>
</dbReference>
<dbReference type="GO" id="GO:0004488">
    <property type="term" value="F:methylenetetrahydrofolate dehydrogenase (NADP+) activity"/>
    <property type="evidence" value="ECO:0007669"/>
    <property type="project" value="UniProtKB-UniRule"/>
</dbReference>
<dbReference type="GO" id="GO:0000105">
    <property type="term" value="P:L-histidine biosynthetic process"/>
    <property type="evidence" value="ECO:0007669"/>
    <property type="project" value="UniProtKB-KW"/>
</dbReference>
<dbReference type="GO" id="GO:0009086">
    <property type="term" value="P:methionine biosynthetic process"/>
    <property type="evidence" value="ECO:0007669"/>
    <property type="project" value="UniProtKB-KW"/>
</dbReference>
<dbReference type="GO" id="GO:0006164">
    <property type="term" value="P:purine nucleotide biosynthetic process"/>
    <property type="evidence" value="ECO:0007669"/>
    <property type="project" value="UniProtKB-KW"/>
</dbReference>
<dbReference type="GO" id="GO:0035999">
    <property type="term" value="P:tetrahydrofolate interconversion"/>
    <property type="evidence" value="ECO:0007669"/>
    <property type="project" value="UniProtKB-UniRule"/>
</dbReference>
<dbReference type="CDD" id="cd01080">
    <property type="entry name" value="NAD_bind_m-THF_DH_Cyclohyd"/>
    <property type="match status" value="1"/>
</dbReference>
<dbReference type="FunFam" id="3.40.50.720:FF:000006">
    <property type="entry name" value="Bifunctional protein FolD"/>
    <property type="match status" value="1"/>
</dbReference>
<dbReference type="FunFam" id="3.40.50.10860:FF:000005">
    <property type="entry name" value="C-1-tetrahydrofolate synthase, cytoplasmic, putative"/>
    <property type="match status" value="1"/>
</dbReference>
<dbReference type="Gene3D" id="3.40.50.10860">
    <property type="entry name" value="Leucine Dehydrogenase, chain A, domain 1"/>
    <property type="match status" value="1"/>
</dbReference>
<dbReference type="Gene3D" id="3.40.50.720">
    <property type="entry name" value="NAD(P)-binding Rossmann-like Domain"/>
    <property type="match status" value="1"/>
</dbReference>
<dbReference type="HAMAP" id="MF_01576">
    <property type="entry name" value="THF_DHG_CYH"/>
    <property type="match status" value="1"/>
</dbReference>
<dbReference type="InterPro" id="IPR046346">
    <property type="entry name" value="Aminoacid_DH-like_N_sf"/>
</dbReference>
<dbReference type="InterPro" id="IPR036291">
    <property type="entry name" value="NAD(P)-bd_dom_sf"/>
</dbReference>
<dbReference type="InterPro" id="IPR000672">
    <property type="entry name" value="THF_DH/CycHdrlase"/>
</dbReference>
<dbReference type="InterPro" id="IPR020630">
    <property type="entry name" value="THF_DH/CycHdrlase_cat_dom"/>
</dbReference>
<dbReference type="InterPro" id="IPR020631">
    <property type="entry name" value="THF_DH/CycHdrlase_NAD-bd_dom"/>
</dbReference>
<dbReference type="NCBIfam" id="NF010764">
    <property type="entry name" value="PRK14167.1"/>
    <property type="match status" value="1"/>
</dbReference>
<dbReference type="PANTHER" id="PTHR48099:SF5">
    <property type="entry name" value="C-1-TETRAHYDROFOLATE SYNTHASE, CYTOPLASMIC"/>
    <property type="match status" value="1"/>
</dbReference>
<dbReference type="PANTHER" id="PTHR48099">
    <property type="entry name" value="C-1-TETRAHYDROFOLATE SYNTHASE, CYTOPLASMIC-RELATED"/>
    <property type="match status" value="1"/>
</dbReference>
<dbReference type="Pfam" id="PF00763">
    <property type="entry name" value="THF_DHG_CYH"/>
    <property type="match status" value="1"/>
</dbReference>
<dbReference type="Pfam" id="PF02882">
    <property type="entry name" value="THF_DHG_CYH_C"/>
    <property type="match status" value="1"/>
</dbReference>
<dbReference type="PRINTS" id="PR00085">
    <property type="entry name" value="THFDHDRGNASE"/>
</dbReference>
<dbReference type="SUPFAM" id="SSF53223">
    <property type="entry name" value="Aminoacid dehydrogenase-like, N-terminal domain"/>
    <property type="match status" value="1"/>
</dbReference>
<dbReference type="SUPFAM" id="SSF51735">
    <property type="entry name" value="NAD(P)-binding Rossmann-fold domains"/>
    <property type="match status" value="1"/>
</dbReference>
<keyword id="KW-0028">Amino-acid biosynthesis</keyword>
<keyword id="KW-0368">Histidine biosynthesis</keyword>
<keyword id="KW-0378">Hydrolase</keyword>
<keyword id="KW-0486">Methionine biosynthesis</keyword>
<keyword id="KW-0511">Multifunctional enzyme</keyword>
<keyword id="KW-0521">NADP</keyword>
<keyword id="KW-0554">One-carbon metabolism</keyword>
<keyword id="KW-0560">Oxidoreductase</keyword>
<keyword id="KW-0614">Plasmid</keyword>
<keyword id="KW-0658">Purine biosynthesis</keyword>
<keyword id="KW-1185">Reference proteome</keyword>
<protein>
    <recommendedName>
        <fullName evidence="1">Bifunctional protein FolD 2</fullName>
    </recommendedName>
    <domain>
        <recommendedName>
            <fullName evidence="1">Methylenetetrahydrofolate dehydrogenase</fullName>
            <ecNumber evidence="1">1.5.1.5</ecNumber>
        </recommendedName>
    </domain>
    <domain>
        <recommendedName>
            <fullName evidence="1">Methenyltetrahydrofolate cyclohydrolase</fullName>
            <ecNumber evidence="1">3.5.4.9</ecNumber>
        </recommendedName>
    </domain>
</protein>
<comment type="function">
    <text evidence="1">Catalyzes the oxidation of 5,10-methylenetetrahydrofolate to 5,10-methenyltetrahydrofolate and then the hydrolysis of 5,10-methenyltetrahydrofolate to 10-formyltetrahydrofolate.</text>
</comment>
<comment type="catalytic activity">
    <reaction evidence="1">
        <text>(6R)-5,10-methylene-5,6,7,8-tetrahydrofolate + NADP(+) = (6R)-5,10-methenyltetrahydrofolate + NADPH</text>
        <dbReference type="Rhea" id="RHEA:22812"/>
        <dbReference type="ChEBI" id="CHEBI:15636"/>
        <dbReference type="ChEBI" id="CHEBI:57455"/>
        <dbReference type="ChEBI" id="CHEBI:57783"/>
        <dbReference type="ChEBI" id="CHEBI:58349"/>
        <dbReference type="EC" id="1.5.1.5"/>
    </reaction>
</comment>
<comment type="catalytic activity">
    <reaction evidence="1">
        <text>(6R)-5,10-methenyltetrahydrofolate + H2O = (6R)-10-formyltetrahydrofolate + H(+)</text>
        <dbReference type="Rhea" id="RHEA:23700"/>
        <dbReference type="ChEBI" id="CHEBI:15377"/>
        <dbReference type="ChEBI" id="CHEBI:15378"/>
        <dbReference type="ChEBI" id="CHEBI:57455"/>
        <dbReference type="ChEBI" id="CHEBI:195366"/>
        <dbReference type="EC" id="3.5.4.9"/>
    </reaction>
</comment>
<comment type="pathway">
    <text evidence="1">One-carbon metabolism; tetrahydrofolate interconversion.</text>
</comment>
<comment type="subunit">
    <text evidence="1">Homodimer.</text>
</comment>
<comment type="similarity">
    <text evidence="1">Belongs to the tetrahydrofolate dehydrogenase/cyclohydrolase family.</text>
</comment>